<gene>
    <name type="primary">TUSC2</name>
    <name type="synonym">C3orf11</name>
    <name type="synonym">FUS1</name>
    <name type="synonym">LGCC</name>
    <name type="synonym">PDAP2</name>
</gene>
<proteinExistence type="evidence at protein level"/>
<reference key="1">
    <citation type="journal article" date="2001" name="Oncogene">
        <title>Overexpression of candidate tumor suppressor gene FUS1 isolated from the 3p21.3 homozygous deletion region leads to G1 arrest and growth inhibition of lung cancer cells.</title>
        <authorList>
            <person name="Kondo M."/>
            <person name="Ji L."/>
            <person name="Kamibayashi C."/>
            <person name="Tomizawa Y."/>
            <person name="Randle D."/>
            <person name="Sekido Y."/>
            <person name="Yokota J."/>
            <person name="Kashuba V."/>
            <person name="Zabarovsky E."/>
            <person name="Kuzmin I."/>
            <person name="Lerman M."/>
            <person name="Roth J."/>
            <person name="Minna J.D."/>
        </authorList>
    </citation>
    <scope>NUCLEOTIDE SEQUENCE [MRNA]</scope>
</reference>
<reference key="2">
    <citation type="journal article" date="2004" name="Nat. Genet.">
        <title>Complete sequencing and characterization of 21,243 full-length human cDNAs.</title>
        <authorList>
            <person name="Ota T."/>
            <person name="Suzuki Y."/>
            <person name="Nishikawa T."/>
            <person name="Otsuki T."/>
            <person name="Sugiyama T."/>
            <person name="Irie R."/>
            <person name="Wakamatsu A."/>
            <person name="Hayashi K."/>
            <person name="Sato H."/>
            <person name="Nagai K."/>
            <person name="Kimura K."/>
            <person name="Makita H."/>
            <person name="Sekine M."/>
            <person name="Obayashi M."/>
            <person name="Nishi T."/>
            <person name="Shibahara T."/>
            <person name="Tanaka T."/>
            <person name="Ishii S."/>
            <person name="Yamamoto J."/>
            <person name="Saito K."/>
            <person name="Kawai Y."/>
            <person name="Isono Y."/>
            <person name="Nakamura Y."/>
            <person name="Nagahari K."/>
            <person name="Murakami K."/>
            <person name="Yasuda T."/>
            <person name="Iwayanagi T."/>
            <person name="Wagatsuma M."/>
            <person name="Shiratori A."/>
            <person name="Sudo H."/>
            <person name="Hosoiri T."/>
            <person name="Kaku Y."/>
            <person name="Kodaira H."/>
            <person name="Kondo H."/>
            <person name="Sugawara M."/>
            <person name="Takahashi M."/>
            <person name="Kanda K."/>
            <person name="Yokoi T."/>
            <person name="Furuya T."/>
            <person name="Kikkawa E."/>
            <person name="Omura Y."/>
            <person name="Abe K."/>
            <person name="Kamihara K."/>
            <person name="Katsuta N."/>
            <person name="Sato K."/>
            <person name="Tanikawa M."/>
            <person name="Yamazaki M."/>
            <person name="Ninomiya K."/>
            <person name="Ishibashi T."/>
            <person name="Yamashita H."/>
            <person name="Murakawa K."/>
            <person name="Fujimori K."/>
            <person name="Tanai H."/>
            <person name="Kimata M."/>
            <person name="Watanabe M."/>
            <person name="Hiraoka S."/>
            <person name="Chiba Y."/>
            <person name="Ishida S."/>
            <person name="Ono Y."/>
            <person name="Takiguchi S."/>
            <person name="Watanabe S."/>
            <person name="Yosida M."/>
            <person name="Hotuta T."/>
            <person name="Kusano J."/>
            <person name="Kanehori K."/>
            <person name="Takahashi-Fujii A."/>
            <person name="Hara H."/>
            <person name="Tanase T.-O."/>
            <person name="Nomura Y."/>
            <person name="Togiya S."/>
            <person name="Komai F."/>
            <person name="Hara R."/>
            <person name="Takeuchi K."/>
            <person name="Arita M."/>
            <person name="Imose N."/>
            <person name="Musashino K."/>
            <person name="Yuuki H."/>
            <person name="Oshima A."/>
            <person name="Sasaki N."/>
            <person name="Aotsuka S."/>
            <person name="Yoshikawa Y."/>
            <person name="Matsunawa H."/>
            <person name="Ichihara T."/>
            <person name="Shiohata N."/>
            <person name="Sano S."/>
            <person name="Moriya S."/>
            <person name="Momiyama H."/>
            <person name="Satoh N."/>
            <person name="Takami S."/>
            <person name="Terashima Y."/>
            <person name="Suzuki O."/>
            <person name="Nakagawa S."/>
            <person name="Senoh A."/>
            <person name="Mizoguchi H."/>
            <person name="Goto Y."/>
            <person name="Shimizu F."/>
            <person name="Wakebe H."/>
            <person name="Hishigaki H."/>
            <person name="Watanabe T."/>
            <person name="Sugiyama A."/>
            <person name="Takemoto M."/>
            <person name="Kawakami B."/>
            <person name="Yamazaki M."/>
            <person name="Watanabe K."/>
            <person name="Kumagai A."/>
            <person name="Itakura S."/>
            <person name="Fukuzumi Y."/>
            <person name="Fujimori Y."/>
            <person name="Komiyama M."/>
            <person name="Tashiro H."/>
            <person name="Tanigami A."/>
            <person name="Fujiwara T."/>
            <person name="Ono T."/>
            <person name="Yamada K."/>
            <person name="Fujii Y."/>
            <person name="Ozaki K."/>
            <person name="Hirao M."/>
            <person name="Ohmori Y."/>
            <person name="Kawabata A."/>
            <person name="Hikiji T."/>
            <person name="Kobatake N."/>
            <person name="Inagaki H."/>
            <person name="Ikema Y."/>
            <person name="Okamoto S."/>
            <person name="Okitani R."/>
            <person name="Kawakami T."/>
            <person name="Noguchi S."/>
            <person name="Itoh T."/>
            <person name="Shigeta K."/>
            <person name="Senba T."/>
            <person name="Matsumura K."/>
            <person name="Nakajima Y."/>
            <person name="Mizuno T."/>
            <person name="Morinaga M."/>
            <person name="Sasaki M."/>
            <person name="Togashi T."/>
            <person name="Oyama M."/>
            <person name="Hata H."/>
            <person name="Watanabe M."/>
            <person name="Komatsu T."/>
            <person name="Mizushima-Sugano J."/>
            <person name="Satoh T."/>
            <person name="Shirai Y."/>
            <person name="Takahashi Y."/>
            <person name="Nakagawa K."/>
            <person name="Okumura K."/>
            <person name="Nagase T."/>
            <person name="Nomura N."/>
            <person name="Kikuchi H."/>
            <person name="Masuho Y."/>
            <person name="Yamashita R."/>
            <person name="Nakai K."/>
            <person name="Yada T."/>
            <person name="Nakamura Y."/>
            <person name="Ohara O."/>
            <person name="Isogai T."/>
            <person name="Sugano S."/>
        </authorList>
    </citation>
    <scope>NUCLEOTIDE SEQUENCE [LARGE SCALE MRNA]</scope>
    <source>
        <tissue>Subthalamic nucleus</tissue>
    </source>
</reference>
<reference key="3">
    <citation type="submission" date="2005-07" db="EMBL/GenBank/DDBJ databases">
        <authorList>
            <person name="Mural R.J."/>
            <person name="Istrail S."/>
            <person name="Sutton G.G."/>
            <person name="Florea L."/>
            <person name="Halpern A.L."/>
            <person name="Mobarry C.M."/>
            <person name="Lippert R."/>
            <person name="Walenz B."/>
            <person name="Shatkay H."/>
            <person name="Dew I."/>
            <person name="Miller J.R."/>
            <person name="Flanigan M.J."/>
            <person name="Edwards N.J."/>
            <person name="Bolanos R."/>
            <person name="Fasulo D."/>
            <person name="Halldorsson B.V."/>
            <person name="Hannenhalli S."/>
            <person name="Turner R."/>
            <person name="Yooseph S."/>
            <person name="Lu F."/>
            <person name="Nusskern D.R."/>
            <person name="Shue B.C."/>
            <person name="Zheng X.H."/>
            <person name="Zhong F."/>
            <person name="Delcher A.L."/>
            <person name="Huson D.H."/>
            <person name="Kravitz S.A."/>
            <person name="Mouchard L."/>
            <person name="Reinert K."/>
            <person name="Remington K.A."/>
            <person name="Clark A.G."/>
            <person name="Waterman M.S."/>
            <person name="Eichler E.E."/>
            <person name="Adams M.D."/>
            <person name="Hunkapiller M.W."/>
            <person name="Myers E.W."/>
            <person name="Venter J.C."/>
        </authorList>
    </citation>
    <scope>NUCLEOTIDE SEQUENCE [LARGE SCALE GENOMIC DNA]</scope>
</reference>
<reference key="4">
    <citation type="journal article" date="2004" name="Genome Res.">
        <title>The status, quality, and expansion of the NIH full-length cDNA project: the Mammalian Gene Collection (MGC).</title>
        <authorList>
            <consortium name="The MGC Project Team"/>
        </authorList>
    </citation>
    <scope>NUCLEOTIDE SEQUENCE [LARGE SCALE MRNA]</scope>
    <source>
        <tissue>Placenta</tissue>
    </source>
</reference>
<reference key="5">
    <citation type="journal article" date="2004" name="Cancer Res.">
        <title>Myristoylation of the fus1 protein is required for tumor suppression in human lung cancer cells.</title>
        <authorList>
            <person name="Uno F."/>
            <person name="Sasaki J."/>
            <person name="Nishizaki M."/>
            <person name="Carboni G."/>
            <person name="Xu K."/>
            <person name="Atkinson E.N."/>
            <person name="Kondo M."/>
            <person name="Minna J.D."/>
            <person name="Roth J.A."/>
            <person name="Ji L."/>
        </authorList>
    </citation>
    <scope>MYRISTOYLATION AT GLY-2</scope>
</reference>
<reference key="6">
    <citation type="journal article" date="2009" name="Sci. Signal.">
        <title>Quantitative phosphoproteomic analysis of T cell receptor signaling reveals system-wide modulation of protein-protein interactions.</title>
        <authorList>
            <person name="Mayya V."/>
            <person name="Lundgren D.H."/>
            <person name="Hwang S.-I."/>
            <person name="Rezaul K."/>
            <person name="Wu L."/>
            <person name="Eng J.K."/>
            <person name="Rodionov V."/>
            <person name="Han D.K."/>
        </authorList>
    </citation>
    <scope>PHOSPHORYLATION [LARGE SCALE ANALYSIS] AT SER-50</scope>
    <scope>IDENTIFICATION BY MASS SPECTROMETRY [LARGE SCALE ANALYSIS]</scope>
    <source>
        <tissue>Leukemic T-cell</tissue>
    </source>
</reference>
<reference key="7">
    <citation type="journal article" date="2014" name="J. Proteomics">
        <title>An enzyme assisted RP-RPLC approach for in-depth analysis of human liver phosphoproteome.</title>
        <authorList>
            <person name="Bian Y."/>
            <person name="Song C."/>
            <person name="Cheng K."/>
            <person name="Dong M."/>
            <person name="Wang F."/>
            <person name="Huang J."/>
            <person name="Sun D."/>
            <person name="Wang L."/>
            <person name="Ye M."/>
            <person name="Zou H."/>
        </authorList>
    </citation>
    <scope>PHOSPHORYLATION [LARGE SCALE ANALYSIS] AT SER-50</scope>
    <scope>IDENTIFICATION BY MASS SPECTROMETRY [LARGE SCALE ANALYSIS]</scope>
    <source>
        <tissue>Liver</tissue>
    </source>
</reference>
<accession>O75896</accession>
<accession>B2R4Y9</accession>
<dbReference type="EMBL" id="AF055479">
    <property type="protein sequence ID" value="AAC35497.1"/>
    <property type="molecule type" value="mRNA"/>
</dbReference>
<dbReference type="EMBL" id="AK311998">
    <property type="protein sequence ID" value="BAG34936.1"/>
    <property type="molecule type" value="mRNA"/>
</dbReference>
<dbReference type="EMBL" id="CH471055">
    <property type="protein sequence ID" value="EAW65097.1"/>
    <property type="molecule type" value="Genomic_DNA"/>
</dbReference>
<dbReference type="EMBL" id="BC023976">
    <property type="protein sequence ID" value="AAH23976.1"/>
    <property type="molecule type" value="mRNA"/>
</dbReference>
<dbReference type="CCDS" id="CCDS2819.1"/>
<dbReference type="RefSeq" id="NP_009206.1">
    <property type="nucleotide sequence ID" value="NM_007275.3"/>
</dbReference>
<dbReference type="BioGRID" id="116462">
    <property type="interactions" value="89"/>
</dbReference>
<dbReference type="FunCoup" id="O75896">
    <property type="interactions" value="807"/>
</dbReference>
<dbReference type="IntAct" id="O75896">
    <property type="interactions" value="62"/>
</dbReference>
<dbReference type="STRING" id="9606.ENSP00000232496"/>
<dbReference type="iPTMnet" id="O75896"/>
<dbReference type="PhosphoSitePlus" id="O75896"/>
<dbReference type="SwissPalm" id="O75896"/>
<dbReference type="BioMuta" id="TUSC2"/>
<dbReference type="jPOST" id="O75896"/>
<dbReference type="MassIVE" id="O75896"/>
<dbReference type="PaxDb" id="9606-ENSP00000232496"/>
<dbReference type="PeptideAtlas" id="O75896"/>
<dbReference type="ProteomicsDB" id="50250"/>
<dbReference type="Pumba" id="O75896"/>
<dbReference type="Antibodypedia" id="30895">
    <property type="antibodies" value="195 antibodies from 30 providers"/>
</dbReference>
<dbReference type="DNASU" id="11334"/>
<dbReference type="Ensembl" id="ENST00000232496.5">
    <property type="protein sequence ID" value="ENSP00000232496.4"/>
    <property type="gene ID" value="ENSG00000114383.10"/>
</dbReference>
<dbReference type="GeneID" id="11334"/>
<dbReference type="KEGG" id="hsa:11334"/>
<dbReference type="MANE-Select" id="ENST00000232496.5">
    <property type="protein sequence ID" value="ENSP00000232496.4"/>
    <property type="RefSeq nucleotide sequence ID" value="NM_007275.3"/>
    <property type="RefSeq protein sequence ID" value="NP_009206.1"/>
</dbReference>
<dbReference type="UCSC" id="uc003czy.2">
    <property type="organism name" value="human"/>
</dbReference>
<dbReference type="AGR" id="HGNC:17034"/>
<dbReference type="CTD" id="11334"/>
<dbReference type="DisGeNET" id="11334"/>
<dbReference type="GeneCards" id="TUSC2"/>
<dbReference type="HGNC" id="HGNC:17034">
    <property type="gene designation" value="TUSC2"/>
</dbReference>
<dbReference type="HPA" id="ENSG00000114383">
    <property type="expression patterns" value="Low tissue specificity"/>
</dbReference>
<dbReference type="MIM" id="607052">
    <property type="type" value="gene"/>
</dbReference>
<dbReference type="neXtProt" id="NX_O75896"/>
<dbReference type="OpenTargets" id="ENSG00000114383"/>
<dbReference type="PharmGKB" id="PA134968273"/>
<dbReference type="VEuPathDB" id="HostDB:ENSG00000114383"/>
<dbReference type="eggNOG" id="ENOG502S21H">
    <property type="taxonomic scope" value="Eukaryota"/>
</dbReference>
<dbReference type="GeneTree" id="ENSGT00390000008040"/>
<dbReference type="HOGENOM" id="CLU_152285_0_0_1"/>
<dbReference type="InParanoid" id="O75896"/>
<dbReference type="OMA" id="DTPRIHV"/>
<dbReference type="OrthoDB" id="9025707at2759"/>
<dbReference type="PAN-GO" id="O75896">
    <property type="GO annotations" value="3 GO annotations based on evolutionary models"/>
</dbReference>
<dbReference type="PhylomeDB" id="O75896"/>
<dbReference type="TreeFam" id="TF314634"/>
<dbReference type="PathwayCommons" id="O75896"/>
<dbReference type="SignaLink" id="O75896"/>
<dbReference type="BioGRID-ORCS" id="11334">
    <property type="hits" value="42 hits in 1155 CRISPR screens"/>
</dbReference>
<dbReference type="ChiTaRS" id="TUSC2">
    <property type="organism name" value="human"/>
</dbReference>
<dbReference type="GeneWiki" id="TUSC2"/>
<dbReference type="GenomeRNAi" id="11334"/>
<dbReference type="Pharos" id="O75896">
    <property type="development level" value="Tbio"/>
</dbReference>
<dbReference type="PRO" id="PR:O75896"/>
<dbReference type="Proteomes" id="UP000005640">
    <property type="component" value="Chromosome 3"/>
</dbReference>
<dbReference type="RNAct" id="O75896">
    <property type="molecule type" value="protein"/>
</dbReference>
<dbReference type="Bgee" id="ENSG00000114383">
    <property type="expression patterns" value="Expressed in prefrontal cortex and 209 other cell types or tissues"/>
</dbReference>
<dbReference type="ExpressionAtlas" id="O75896">
    <property type="expression patterns" value="baseline and differential"/>
</dbReference>
<dbReference type="GO" id="GO:0005739">
    <property type="term" value="C:mitochondrion"/>
    <property type="evidence" value="ECO:0000318"/>
    <property type="project" value="GO_Central"/>
</dbReference>
<dbReference type="GO" id="GO:0048469">
    <property type="term" value="P:cell maturation"/>
    <property type="evidence" value="ECO:0007669"/>
    <property type="project" value="Ensembl"/>
</dbReference>
<dbReference type="GO" id="GO:0006954">
    <property type="term" value="P:inflammatory response"/>
    <property type="evidence" value="ECO:0000318"/>
    <property type="project" value="GO_Central"/>
</dbReference>
<dbReference type="GO" id="GO:0001779">
    <property type="term" value="P:natural killer cell differentiation"/>
    <property type="evidence" value="ECO:0007669"/>
    <property type="project" value="Ensembl"/>
</dbReference>
<dbReference type="GO" id="GO:0032700">
    <property type="term" value="P:negative regulation of interleukin-17 production"/>
    <property type="evidence" value="ECO:0007669"/>
    <property type="project" value="Ensembl"/>
</dbReference>
<dbReference type="GO" id="GO:0070945">
    <property type="term" value="P:neutrophil-mediated killing of gram-negative bacterium"/>
    <property type="evidence" value="ECO:0007669"/>
    <property type="project" value="Ensembl"/>
</dbReference>
<dbReference type="GO" id="GO:0006909">
    <property type="term" value="P:phagocytosis"/>
    <property type="evidence" value="ECO:0007669"/>
    <property type="project" value="Ensembl"/>
</dbReference>
<dbReference type="GO" id="GO:0032733">
    <property type="term" value="P:positive regulation of interleukin-10 production"/>
    <property type="evidence" value="ECO:0007669"/>
    <property type="project" value="Ensembl"/>
</dbReference>
<dbReference type="GO" id="GO:0051881">
    <property type="term" value="P:regulation of mitochondrial membrane potential"/>
    <property type="evidence" value="ECO:0000318"/>
    <property type="project" value="GO_Central"/>
</dbReference>
<dbReference type="GO" id="GO:2000377">
    <property type="term" value="P:regulation of reactive oxygen species metabolic process"/>
    <property type="evidence" value="ECO:0007669"/>
    <property type="project" value="Ensembl"/>
</dbReference>
<dbReference type="InterPro" id="IPR029393">
    <property type="entry name" value="FUS1"/>
</dbReference>
<dbReference type="PANTHER" id="PTHR15453">
    <property type="entry name" value="TUMOR SUPPRESSOR CANDIDATE 2"/>
    <property type="match status" value="1"/>
</dbReference>
<dbReference type="PANTHER" id="PTHR15453:SF8">
    <property type="entry name" value="TUMOR SUPPRESSOR CANDIDATE 2"/>
    <property type="match status" value="1"/>
</dbReference>
<dbReference type="Pfam" id="PF15000">
    <property type="entry name" value="TUSC2"/>
    <property type="match status" value="1"/>
</dbReference>
<protein>
    <recommendedName>
        <fullName>Tumor suppressor candidate 2</fullName>
    </recommendedName>
    <alternativeName>
        <fullName>Fusion 1 protein</fullName>
        <shortName>Fus-1 protein</shortName>
    </alternativeName>
    <alternativeName>
        <fullName>PDGFA-associated protein 2</fullName>
    </alternativeName>
</protein>
<comment type="function">
    <text>May function as a tumor suppressor, inhibiting colony formation, causing G1 arrest and ultimately inducing apoptosis in homozygous 3p21.3 120-kb region-deficient cells.</text>
</comment>
<comment type="interaction">
    <interactant intactId="EBI-1052725">
        <id>O75896</id>
    </interactant>
    <interactant intactId="EBI-750641">
        <id>Q5TD97</id>
        <label>FHL5</label>
    </interactant>
    <organismsDiffer>false</organismsDiffer>
    <experiments>3</experiments>
</comment>
<comment type="interaction">
    <interactant intactId="EBI-1052725">
        <id>O75896</id>
    </interactant>
    <interactant intactId="EBI-724076">
        <id>Q99750</id>
        <label>MDFI</label>
    </interactant>
    <organismsDiffer>false</organismsDiffer>
    <experiments>7</experiments>
</comment>
<comment type="interaction">
    <interactant intactId="EBI-1052725">
        <id>O75896</id>
    </interactant>
    <interactant intactId="EBI-740322">
        <id>Q93062</id>
        <label>RBPMS</label>
    </interactant>
    <organismsDiffer>false</organismsDiffer>
    <experiments>4</experiments>
</comment>
<comment type="tissue specificity">
    <text>Strong expression in heart, lung, skeletal muscle, kidney, and pancreas, followed by brain and liver, lowest levels in placenta.</text>
</comment>
<comment type="PTM">
    <text evidence="1">Myristoylation is required for tumor suppressor activity.</text>
</comment>
<comment type="similarity">
    <text evidence="2">Belongs to the TUSC2 family.</text>
</comment>
<sequence length="110" mass="12074">MGASGSKARGLWPFASAAGGGGSEAAGAEQALVRPRGRAVPPFVFTRRGSMFYDEDGDLAHEFYEETIVTKNGQKRAKLRRVHKNLIPQGIVKLDHPRIHVDFPVILYEV</sequence>
<name>TUSC2_HUMAN</name>
<keyword id="KW-0131">Cell cycle</keyword>
<keyword id="KW-0449">Lipoprotein</keyword>
<keyword id="KW-0519">Myristate</keyword>
<keyword id="KW-0597">Phosphoprotein</keyword>
<keyword id="KW-1267">Proteomics identification</keyword>
<keyword id="KW-1185">Reference proteome</keyword>
<keyword id="KW-0043">Tumor suppressor</keyword>
<feature type="initiator methionine" description="Removed">
    <location>
        <position position="1"/>
    </location>
</feature>
<feature type="chain" id="PRO_0000148170" description="Tumor suppressor candidate 2">
    <location>
        <begin position="2"/>
        <end position="110"/>
    </location>
</feature>
<feature type="modified residue" description="Phosphoserine" evidence="3 4">
    <location>
        <position position="50"/>
    </location>
</feature>
<feature type="lipid moiety-binding region" description="N-myristoyl glycine" evidence="1">
    <location>
        <position position="2"/>
    </location>
</feature>
<organism>
    <name type="scientific">Homo sapiens</name>
    <name type="common">Human</name>
    <dbReference type="NCBI Taxonomy" id="9606"/>
    <lineage>
        <taxon>Eukaryota</taxon>
        <taxon>Metazoa</taxon>
        <taxon>Chordata</taxon>
        <taxon>Craniata</taxon>
        <taxon>Vertebrata</taxon>
        <taxon>Euteleostomi</taxon>
        <taxon>Mammalia</taxon>
        <taxon>Eutheria</taxon>
        <taxon>Euarchontoglires</taxon>
        <taxon>Primates</taxon>
        <taxon>Haplorrhini</taxon>
        <taxon>Catarrhini</taxon>
        <taxon>Hominidae</taxon>
        <taxon>Homo</taxon>
    </lineage>
</organism>
<evidence type="ECO:0000269" key="1">
    <source>
    </source>
</evidence>
<evidence type="ECO:0000305" key="2"/>
<evidence type="ECO:0007744" key="3">
    <source>
    </source>
</evidence>
<evidence type="ECO:0007744" key="4">
    <source>
    </source>
</evidence>